<keyword id="KW-0560">Oxidoreductase</keyword>
<keyword id="KW-0663">Pyridoxal phosphate</keyword>
<keyword id="KW-1185">Reference proteome</keyword>
<name>GCSP_BRUC2</name>
<feature type="chain" id="PRO_1000083203" description="Glycine dehydrogenase (decarboxylating)">
    <location>
        <begin position="1"/>
        <end position="932"/>
    </location>
</feature>
<feature type="modified residue" description="N6-(pyridoxal phosphate)lysine" evidence="1">
    <location>
        <position position="685"/>
    </location>
</feature>
<dbReference type="EC" id="1.4.4.2" evidence="1"/>
<dbReference type="EMBL" id="CP000873">
    <property type="protein sequence ID" value="ABX63898.1"/>
    <property type="molecule type" value="Genomic_DNA"/>
</dbReference>
<dbReference type="RefSeq" id="WP_006133371.1">
    <property type="nucleotide sequence ID" value="NC_010104.1"/>
</dbReference>
<dbReference type="SMR" id="A9MC11"/>
<dbReference type="GeneID" id="55592379"/>
<dbReference type="KEGG" id="bcs:BCAN_B0730"/>
<dbReference type="HOGENOM" id="CLU_004620_2_3_5"/>
<dbReference type="PhylomeDB" id="A9MC11"/>
<dbReference type="PRO" id="PR:A9MC11"/>
<dbReference type="Proteomes" id="UP000001385">
    <property type="component" value="Chromosome II"/>
</dbReference>
<dbReference type="GO" id="GO:0005829">
    <property type="term" value="C:cytosol"/>
    <property type="evidence" value="ECO:0007669"/>
    <property type="project" value="TreeGrafter"/>
</dbReference>
<dbReference type="GO" id="GO:0005960">
    <property type="term" value="C:glycine cleavage complex"/>
    <property type="evidence" value="ECO:0007669"/>
    <property type="project" value="TreeGrafter"/>
</dbReference>
<dbReference type="GO" id="GO:0016594">
    <property type="term" value="F:glycine binding"/>
    <property type="evidence" value="ECO:0007669"/>
    <property type="project" value="TreeGrafter"/>
</dbReference>
<dbReference type="GO" id="GO:0004375">
    <property type="term" value="F:glycine dehydrogenase (decarboxylating) activity"/>
    <property type="evidence" value="ECO:0007669"/>
    <property type="project" value="UniProtKB-EC"/>
</dbReference>
<dbReference type="GO" id="GO:0030170">
    <property type="term" value="F:pyridoxal phosphate binding"/>
    <property type="evidence" value="ECO:0007669"/>
    <property type="project" value="TreeGrafter"/>
</dbReference>
<dbReference type="GO" id="GO:0019464">
    <property type="term" value="P:glycine decarboxylation via glycine cleavage system"/>
    <property type="evidence" value="ECO:0007669"/>
    <property type="project" value="UniProtKB-UniRule"/>
</dbReference>
<dbReference type="CDD" id="cd00613">
    <property type="entry name" value="GDC-P"/>
    <property type="match status" value="2"/>
</dbReference>
<dbReference type="FunFam" id="3.90.1150.10:FF:000007">
    <property type="entry name" value="Glycine dehydrogenase (decarboxylating), mitochondrial"/>
    <property type="match status" value="1"/>
</dbReference>
<dbReference type="FunFam" id="3.40.640.10:FF:000007">
    <property type="entry name" value="glycine dehydrogenase (Decarboxylating), mitochondrial"/>
    <property type="match status" value="1"/>
</dbReference>
<dbReference type="Gene3D" id="3.90.1150.10">
    <property type="entry name" value="Aspartate Aminotransferase, domain 1"/>
    <property type="match status" value="2"/>
</dbReference>
<dbReference type="Gene3D" id="3.40.640.10">
    <property type="entry name" value="Type I PLP-dependent aspartate aminotransferase-like (Major domain)"/>
    <property type="match status" value="2"/>
</dbReference>
<dbReference type="HAMAP" id="MF_00711">
    <property type="entry name" value="GcvP"/>
    <property type="match status" value="1"/>
</dbReference>
<dbReference type="InterPro" id="IPR003437">
    <property type="entry name" value="GcvP"/>
</dbReference>
<dbReference type="InterPro" id="IPR049316">
    <property type="entry name" value="GDC-P_C"/>
</dbReference>
<dbReference type="InterPro" id="IPR049315">
    <property type="entry name" value="GDC-P_N"/>
</dbReference>
<dbReference type="InterPro" id="IPR020581">
    <property type="entry name" value="GDC_P"/>
</dbReference>
<dbReference type="InterPro" id="IPR015424">
    <property type="entry name" value="PyrdxlP-dep_Trfase"/>
</dbReference>
<dbReference type="InterPro" id="IPR015421">
    <property type="entry name" value="PyrdxlP-dep_Trfase_major"/>
</dbReference>
<dbReference type="InterPro" id="IPR015422">
    <property type="entry name" value="PyrdxlP-dep_Trfase_small"/>
</dbReference>
<dbReference type="NCBIfam" id="TIGR00461">
    <property type="entry name" value="gcvP"/>
    <property type="match status" value="1"/>
</dbReference>
<dbReference type="NCBIfam" id="NF003346">
    <property type="entry name" value="PRK04366.1"/>
    <property type="match status" value="1"/>
</dbReference>
<dbReference type="PANTHER" id="PTHR11773:SF1">
    <property type="entry name" value="GLYCINE DEHYDROGENASE (DECARBOXYLATING), MITOCHONDRIAL"/>
    <property type="match status" value="1"/>
</dbReference>
<dbReference type="PANTHER" id="PTHR11773">
    <property type="entry name" value="GLYCINE DEHYDROGENASE, DECARBOXYLATING"/>
    <property type="match status" value="1"/>
</dbReference>
<dbReference type="Pfam" id="PF21478">
    <property type="entry name" value="GcvP2_C"/>
    <property type="match status" value="1"/>
</dbReference>
<dbReference type="Pfam" id="PF02347">
    <property type="entry name" value="GDC-P"/>
    <property type="match status" value="2"/>
</dbReference>
<dbReference type="SUPFAM" id="SSF53383">
    <property type="entry name" value="PLP-dependent transferases"/>
    <property type="match status" value="2"/>
</dbReference>
<proteinExistence type="inferred from homology"/>
<organism>
    <name type="scientific">Brucella canis (strain ATCC 23365 / NCTC 10854 / RM-666)</name>
    <dbReference type="NCBI Taxonomy" id="483179"/>
    <lineage>
        <taxon>Bacteria</taxon>
        <taxon>Pseudomonadati</taxon>
        <taxon>Pseudomonadota</taxon>
        <taxon>Alphaproteobacteria</taxon>
        <taxon>Hyphomicrobiales</taxon>
        <taxon>Brucellaceae</taxon>
        <taxon>Brucella/Ochrobactrum group</taxon>
        <taxon>Brucella</taxon>
    </lineage>
</organism>
<evidence type="ECO:0000255" key="1">
    <source>
        <dbReference type="HAMAP-Rule" id="MF_00711"/>
    </source>
</evidence>
<protein>
    <recommendedName>
        <fullName evidence="1">Glycine dehydrogenase (decarboxylating)</fullName>
        <ecNumber evidence="1">1.4.4.2</ecNumber>
    </recommendedName>
    <alternativeName>
        <fullName evidence="1">Glycine cleavage system P-protein</fullName>
    </alternativeName>
    <alternativeName>
        <fullName evidence="1">Glycine decarboxylase</fullName>
    </alternativeName>
    <alternativeName>
        <fullName evidence="1">Glycine dehydrogenase (aminomethyl-transferring)</fullName>
    </alternativeName>
</protein>
<comment type="function">
    <text evidence="1">The glycine cleavage system catalyzes the degradation of glycine. The P protein binds the alpha-amino group of glycine through its pyridoxal phosphate cofactor; CO(2) is released and the remaining methylamine moiety is then transferred to the lipoamide cofactor of the H protein.</text>
</comment>
<comment type="catalytic activity">
    <reaction evidence="1">
        <text>N(6)-[(R)-lipoyl]-L-lysyl-[glycine-cleavage complex H protein] + glycine + H(+) = N(6)-[(R)-S(8)-aminomethyldihydrolipoyl]-L-lysyl-[glycine-cleavage complex H protein] + CO2</text>
        <dbReference type="Rhea" id="RHEA:24304"/>
        <dbReference type="Rhea" id="RHEA-COMP:10494"/>
        <dbReference type="Rhea" id="RHEA-COMP:10495"/>
        <dbReference type="ChEBI" id="CHEBI:15378"/>
        <dbReference type="ChEBI" id="CHEBI:16526"/>
        <dbReference type="ChEBI" id="CHEBI:57305"/>
        <dbReference type="ChEBI" id="CHEBI:83099"/>
        <dbReference type="ChEBI" id="CHEBI:83143"/>
        <dbReference type="EC" id="1.4.4.2"/>
    </reaction>
</comment>
<comment type="cofactor">
    <cofactor evidence="1">
        <name>pyridoxal 5'-phosphate</name>
        <dbReference type="ChEBI" id="CHEBI:597326"/>
    </cofactor>
</comment>
<comment type="subunit">
    <text evidence="1">The glycine cleavage system is composed of four proteins: P, T, L and H.</text>
</comment>
<comment type="similarity">
    <text evidence="1">Belongs to the GcvP family.</text>
</comment>
<gene>
    <name evidence="1" type="primary">gcvP</name>
    <name type="ordered locus">BCAN_B0730</name>
</gene>
<reference key="1">
    <citation type="submission" date="2007-10" db="EMBL/GenBank/DDBJ databases">
        <title>Brucella canis ATCC 23365 whole genome shotgun sequencing project.</title>
        <authorList>
            <person name="Setubal J.C."/>
            <person name="Bowns C."/>
            <person name="Boyle S."/>
            <person name="Crasta O.R."/>
            <person name="Czar M.J."/>
            <person name="Dharmanolla C."/>
            <person name="Gillespie J.J."/>
            <person name="Kenyon R.W."/>
            <person name="Lu J."/>
            <person name="Mane S."/>
            <person name="Mohapatra S."/>
            <person name="Nagrani S."/>
            <person name="Purkayastha A."/>
            <person name="Rajasimha H.K."/>
            <person name="Shallom J.M."/>
            <person name="Shallom S."/>
            <person name="Shukla M."/>
            <person name="Snyder E.E."/>
            <person name="Sobral B.W."/>
            <person name="Wattam A.R."/>
            <person name="Will R."/>
            <person name="Williams K."/>
            <person name="Yoo H."/>
            <person name="Bruce D."/>
            <person name="Detter C."/>
            <person name="Munk C."/>
            <person name="Brettin T.S."/>
        </authorList>
    </citation>
    <scope>NUCLEOTIDE SEQUENCE [LARGE SCALE GENOMIC DNA]</scope>
    <source>
        <strain>ATCC 23365 / NCTC 10854 / RM-666</strain>
    </source>
</reference>
<sequence>MTEFLPFVARHIGPRHEDERAMLAALGLPSMETLITQAVPASIRLNRALNLPAALSEADALAELGTIMGRNVVKKSFIGAGYHGVHTPPVIQRNLFENPAWYTAYTPYQSEISQGRLELLFHFQTLVAELTGLPVACASLLDEATAVAEAIGVACRHHRDKRSRILLAGELHPQTVDVVNTRAEPLGWEIATGSDVDDNTAAIVVPWPDTRGVYGDFAKVIADAKAKGALVIAVADPLALTIMEAPARWGADMAVGSMQRYGVPMGFGGPHAAYLAVSEALTRIIPGRIVGQSVDAHGRAAYRLALQTREQHIRRDKATSNICTAQALLANMAAAFAIWHGPAGLQAIATRVAALAARFAAALKAAGVEIAGESLFDTVTAKVPGKAAAIAAEADKGGRLIRIIDADTVGVTFDETSTEEDLTALASLFGAKPVGGDTVLVPGKERGEGFLTQEVFHSHRSETEMMRFLRRLADKDLALDRAMIPLGSCTMKLNAAAEMMPVSWNTVANLHPFAPAEQVQGYAKMTSDLEAWLCEITGFAGVSLQPNAGSQGEYAGLMAIRHYHQAWGQGHRNICLIPSSAHGTNPASASMAGMSVVVVNCRPDGDIDIDDLKAKAEKHRDNLAAFMITYPSTYGVFEEGIKAFCEIVHDNGGQVYFDGANLNALVGLARPADIGADVCHMNLHKTFCIPHGGGGPGVGPIGVAKHLVPYLPGHVEAGSEHAVAAAQFGSASILVITWMYIRMMGGAGLKKATEAAILNANYIAHRLKGVYPILYTGAHDRVAHECIVDTRVLKDSAGITVEDVAKRLIDYGFHAPSMSWPVAGTLMIEPTESEPKLEIDRLCDAMIAIAGEAKKVADGVWPADDNPLANAPHTASDTLATEWKHPYTREEAVFPGGAFDPTAKYWPPVSRVDNVGGDRNLICSCPPVAAYG</sequence>
<accession>A9MC11</accession>